<accession>A6UU57</accession>
<reference key="1">
    <citation type="submission" date="2007-06" db="EMBL/GenBank/DDBJ databases">
        <title>Complete sequence of Methanococcus aeolicus Nankai-3.</title>
        <authorList>
            <consortium name="US DOE Joint Genome Institute"/>
            <person name="Copeland A."/>
            <person name="Lucas S."/>
            <person name="Lapidus A."/>
            <person name="Barry K."/>
            <person name="Glavina del Rio T."/>
            <person name="Dalin E."/>
            <person name="Tice H."/>
            <person name="Pitluck S."/>
            <person name="Chain P."/>
            <person name="Malfatti S."/>
            <person name="Shin M."/>
            <person name="Vergez L."/>
            <person name="Schmutz J."/>
            <person name="Larimer F."/>
            <person name="Land M."/>
            <person name="Hauser L."/>
            <person name="Kyrpides N."/>
            <person name="Lykidis A."/>
            <person name="Sieprawska-Lupa M."/>
            <person name="Whitman W.B."/>
            <person name="Richardson P."/>
        </authorList>
    </citation>
    <scope>NUCLEOTIDE SEQUENCE [LARGE SCALE GENOMIC DNA]</scope>
    <source>
        <strain>ATCC BAA-1280 / DSM 17508 / OCM 812 / Nankai-3</strain>
    </source>
</reference>
<feature type="chain" id="PRO_1000015991" description="Aspartyl/glutamyl-tRNA(Asn/Gln) amidotransferase subunit B">
    <location>
        <begin position="1"/>
        <end position="469"/>
    </location>
</feature>
<proteinExistence type="inferred from homology"/>
<organism>
    <name type="scientific">Methanococcus aeolicus (strain ATCC BAA-1280 / DSM 17508 / OCM 812 / Nankai-3)</name>
    <dbReference type="NCBI Taxonomy" id="419665"/>
    <lineage>
        <taxon>Archaea</taxon>
        <taxon>Methanobacteriati</taxon>
        <taxon>Methanobacteriota</taxon>
        <taxon>Methanomada group</taxon>
        <taxon>Methanococci</taxon>
        <taxon>Methanococcales</taxon>
        <taxon>Methanococcaceae</taxon>
        <taxon>Methanococcus</taxon>
    </lineage>
</organism>
<name>GATB_META3</name>
<evidence type="ECO:0000255" key="1">
    <source>
        <dbReference type="HAMAP-Rule" id="MF_00121"/>
    </source>
</evidence>
<comment type="function">
    <text evidence="1">Allows the formation of correctly charged Asn-tRNA(Asn) or Gln-tRNA(Gln) through the transamidation of misacylated Asp-tRNA(Asn) or Glu-tRNA(Gln) in organisms which lack either or both of asparaginyl-tRNA or glutaminyl-tRNA synthetases. The reaction takes place in the presence of glutamine and ATP through an activated phospho-Asp-tRNA(Asn) or phospho-Glu-tRNA(Gln).</text>
</comment>
<comment type="catalytic activity">
    <reaction evidence="1">
        <text>L-glutamyl-tRNA(Gln) + L-glutamine + ATP + H2O = L-glutaminyl-tRNA(Gln) + L-glutamate + ADP + phosphate + H(+)</text>
        <dbReference type="Rhea" id="RHEA:17521"/>
        <dbReference type="Rhea" id="RHEA-COMP:9681"/>
        <dbReference type="Rhea" id="RHEA-COMP:9684"/>
        <dbReference type="ChEBI" id="CHEBI:15377"/>
        <dbReference type="ChEBI" id="CHEBI:15378"/>
        <dbReference type="ChEBI" id="CHEBI:29985"/>
        <dbReference type="ChEBI" id="CHEBI:30616"/>
        <dbReference type="ChEBI" id="CHEBI:43474"/>
        <dbReference type="ChEBI" id="CHEBI:58359"/>
        <dbReference type="ChEBI" id="CHEBI:78520"/>
        <dbReference type="ChEBI" id="CHEBI:78521"/>
        <dbReference type="ChEBI" id="CHEBI:456216"/>
    </reaction>
</comment>
<comment type="catalytic activity">
    <reaction evidence="1">
        <text>L-aspartyl-tRNA(Asn) + L-glutamine + ATP + H2O = L-asparaginyl-tRNA(Asn) + L-glutamate + ADP + phosphate + 2 H(+)</text>
        <dbReference type="Rhea" id="RHEA:14513"/>
        <dbReference type="Rhea" id="RHEA-COMP:9674"/>
        <dbReference type="Rhea" id="RHEA-COMP:9677"/>
        <dbReference type="ChEBI" id="CHEBI:15377"/>
        <dbReference type="ChEBI" id="CHEBI:15378"/>
        <dbReference type="ChEBI" id="CHEBI:29985"/>
        <dbReference type="ChEBI" id="CHEBI:30616"/>
        <dbReference type="ChEBI" id="CHEBI:43474"/>
        <dbReference type="ChEBI" id="CHEBI:58359"/>
        <dbReference type="ChEBI" id="CHEBI:78515"/>
        <dbReference type="ChEBI" id="CHEBI:78516"/>
        <dbReference type="ChEBI" id="CHEBI:456216"/>
    </reaction>
</comment>
<comment type="subunit">
    <text evidence="1">Heterotrimer of A, B and C subunits.</text>
</comment>
<comment type="similarity">
    <text evidence="1">Belongs to the GatB/GatE family. GatB subfamily.</text>
</comment>
<protein>
    <recommendedName>
        <fullName evidence="1">Aspartyl/glutamyl-tRNA(Asn/Gln) amidotransferase subunit B</fullName>
        <shortName evidence="1">Asp/Glu-ADT subunit B</shortName>
        <ecNumber evidence="1">6.3.5.-</ecNumber>
    </recommendedName>
</protein>
<sequence>MDETVSMKCGLEIHVQVDTNSKLFCTCPTNYNEVEPNTNICPVCMAHPGARPMPPNKKAVDMAIMVAKMLGCEIVLDKDIYFQRKHYNYPDLPSGYQRTSVPVGEHGKFLGVGITEVHLEEDPGQYKPDLGVVDYNRSGTPLIEIVSDPDIKSPEEAKEFLRQLLRLFNYIGNLRGEGSMRADVNISVNYNGVQGNRVEVKNVNSIKGVYKVLKYEFIRQKNILRRGGEIKRETRAFMEAQLITKAMRSKETADDYRHIPDPDLQPIVINKEWVKTVEEKMPETPMDKEKRFVEQYGIKLEDAKVMVADLALADVFETVVSELGKEKENISLAVIWIRNELRRVLAYNNIDFLESRLKPEHITELIQLITGKTISQKIGKKVIEIMVENKGEKTPKQIIKELGLTVIDSEAVLETACKEAIENNPKAVDDYLTGNEGALNFVVGQVMRATRGRAQPNKVVEILKKLINK</sequence>
<dbReference type="EC" id="6.3.5.-" evidence="1"/>
<dbReference type="EMBL" id="CP000743">
    <property type="protein sequence ID" value="ABR56029.1"/>
    <property type="molecule type" value="Genomic_DNA"/>
</dbReference>
<dbReference type="RefSeq" id="WP_011973161.1">
    <property type="nucleotide sequence ID" value="NC_009635.1"/>
</dbReference>
<dbReference type="SMR" id="A6UU57"/>
<dbReference type="STRING" id="419665.Maeo_0443"/>
<dbReference type="GeneID" id="5326380"/>
<dbReference type="KEGG" id="mae:Maeo_0443"/>
<dbReference type="eggNOG" id="arCOG01718">
    <property type="taxonomic scope" value="Archaea"/>
</dbReference>
<dbReference type="HOGENOM" id="CLU_019240_0_1_2"/>
<dbReference type="OrthoDB" id="52755at2157"/>
<dbReference type="Proteomes" id="UP000001106">
    <property type="component" value="Chromosome"/>
</dbReference>
<dbReference type="GO" id="GO:0050566">
    <property type="term" value="F:asparaginyl-tRNA synthase (glutamine-hydrolyzing) activity"/>
    <property type="evidence" value="ECO:0007669"/>
    <property type="project" value="RHEA"/>
</dbReference>
<dbReference type="GO" id="GO:0005524">
    <property type="term" value="F:ATP binding"/>
    <property type="evidence" value="ECO:0007669"/>
    <property type="project" value="UniProtKB-KW"/>
</dbReference>
<dbReference type="GO" id="GO:0050567">
    <property type="term" value="F:glutaminyl-tRNA synthase (glutamine-hydrolyzing) activity"/>
    <property type="evidence" value="ECO:0007669"/>
    <property type="project" value="UniProtKB-UniRule"/>
</dbReference>
<dbReference type="GO" id="GO:0070681">
    <property type="term" value="P:glutaminyl-tRNAGln biosynthesis via transamidation"/>
    <property type="evidence" value="ECO:0007669"/>
    <property type="project" value="TreeGrafter"/>
</dbReference>
<dbReference type="GO" id="GO:0006412">
    <property type="term" value="P:translation"/>
    <property type="evidence" value="ECO:0007669"/>
    <property type="project" value="UniProtKB-UniRule"/>
</dbReference>
<dbReference type="FunFam" id="1.10.10.410:FF:000001">
    <property type="entry name" value="Aspartyl/glutamyl-tRNA(Asn/Gln) amidotransferase subunit B"/>
    <property type="match status" value="1"/>
</dbReference>
<dbReference type="Gene3D" id="1.10.10.410">
    <property type="match status" value="1"/>
</dbReference>
<dbReference type="Gene3D" id="1.10.150.380">
    <property type="entry name" value="GatB domain, N-terminal subdomain"/>
    <property type="match status" value="1"/>
</dbReference>
<dbReference type="HAMAP" id="MF_00121">
    <property type="entry name" value="GatB"/>
    <property type="match status" value="1"/>
</dbReference>
<dbReference type="InterPro" id="IPR017959">
    <property type="entry name" value="Asn/Gln-tRNA_amidoTrfase_suB/E"/>
</dbReference>
<dbReference type="InterPro" id="IPR006075">
    <property type="entry name" value="Asn/Gln-tRNA_Trfase_suB/E_cat"/>
</dbReference>
<dbReference type="InterPro" id="IPR018027">
    <property type="entry name" value="Asn/Gln_amidotransferase"/>
</dbReference>
<dbReference type="InterPro" id="IPR003789">
    <property type="entry name" value="Asn/Gln_tRNA_amidoTrase-B-like"/>
</dbReference>
<dbReference type="InterPro" id="IPR004413">
    <property type="entry name" value="GatB"/>
</dbReference>
<dbReference type="InterPro" id="IPR042114">
    <property type="entry name" value="GatB_C_1"/>
</dbReference>
<dbReference type="InterPro" id="IPR023168">
    <property type="entry name" value="GatB_Yqey_C_2"/>
</dbReference>
<dbReference type="InterPro" id="IPR017958">
    <property type="entry name" value="Gln-tRNA_amidoTrfase_suB_CS"/>
</dbReference>
<dbReference type="InterPro" id="IPR014746">
    <property type="entry name" value="Gln_synth/guanido_kin_cat_dom"/>
</dbReference>
<dbReference type="NCBIfam" id="TIGR00133">
    <property type="entry name" value="gatB"/>
    <property type="match status" value="1"/>
</dbReference>
<dbReference type="NCBIfam" id="NF004012">
    <property type="entry name" value="PRK05477.1-2"/>
    <property type="match status" value="1"/>
</dbReference>
<dbReference type="NCBIfam" id="NF004014">
    <property type="entry name" value="PRK05477.1-4"/>
    <property type="match status" value="1"/>
</dbReference>
<dbReference type="PANTHER" id="PTHR11659">
    <property type="entry name" value="GLUTAMYL-TRNA GLN AMIDOTRANSFERASE SUBUNIT B MITOCHONDRIAL AND PROKARYOTIC PET112-RELATED"/>
    <property type="match status" value="1"/>
</dbReference>
<dbReference type="PANTHER" id="PTHR11659:SF0">
    <property type="entry name" value="GLUTAMYL-TRNA(GLN) AMIDOTRANSFERASE SUBUNIT B, MITOCHONDRIAL"/>
    <property type="match status" value="1"/>
</dbReference>
<dbReference type="Pfam" id="PF02934">
    <property type="entry name" value="GatB_N"/>
    <property type="match status" value="1"/>
</dbReference>
<dbReference type="Pfam" id="PF02637">
    <property type="entry name" value="GatB_Yqey"/>
    <property type="match status" value="1"/>
</dbReference>
<dbReference type="SMART" id="SM00845">
    <property type="entry name" value="GatB_Yqey"/>
    <property type="match status" value="1"/>
</dbReference>
<dbReference type="SUPFAM" id="SSF89095">
    <property type="entry name" value="GatB/YqeY motif"/>
    <property type="match status" value="1"/>
</dbReference>
<dbReference type="SUPFAM" id="SSF55931">
    <property type="entry name" value="Glutamine synthetase/guanido kinase"/>
    <property type="match status" value="1"/>
</dbReference>
<dbReference type="PROSITE" id="PS01234">
    <property type="entry name" value="GATB"/>
    <property type="match status" value="1"/>
</dbReference>
<keyword id="KW-0067">ATP-binding</keyword>
<keyword id="KW-0436">Ligase</keyword>
<keyword id="KW-0547">Nucleotide-binding</keyword>
<keyword id="KW-0648">Protein biosynthesis</keyword>
<gene>
    <name evidence="1" type="primary">gatB</name>
    <name type="ordered locus">Maeo_0443</name>
</gene>